<accession>O48963</accession>
<reference evidence="40" key="1">
    <citation type="journal article" date="1997" name="Science">
        <title>Arabidopsis NPH1: a protein kinase with a putative redox-sensing domain.</title>
        <authorList>
            <person name="Huala E."/>
            <person name="Oeller P.W."/>
            <person name="Liscum E."/>
            <person name="Han I.-S."/>
            <person name="Larsen E."/>
            <person name="Briggs W.R."/>
        </authorList>
    </citation>
    <scope>NUCLEOTIDE SEQUENCE [MRNA]</scope>
    <scope>MUTAGENESIS OF VAL-774 AND ARG-936</scope>
    <source>
        <strain>cv. Columbia</strain>
        <tissue>Hypocotyl</tissue>
    </source>
</reference>
<reference key="2">
    <citation type="journal article" date="2000" name="Nature">
        <title>Sequence and analysis of chromosome 3 of the plant Arabidopsis thaliana.</title>
        <authorList>
            <person name="Salanoubat M."/>
            <person name="Lemcke K."/>
            <person name="Rieger M."/>
            <person name="Ansorge W."/>
            <person name="Unseld M."/>
            <person name="Fartmann B."/>
            <person name="Valle G."/>
            <person name="Bloecker H."/>
            <person name="Perez-Alonso M."/>
            <person name="Obermaier B."/>
            <person name="Delseny M."/>
            <person name="Boutry M."/>
            <person name="Grivell L.A."/>
            <person name="Mache R."/>
            <person name="Puigdomenech P."/>
            <person name="De Simone V."/>
            <person name="Choisne N."/>
            <person name="Artiguenave F."/>
            <person name="Robert C."/>
            <person name="Brottier P."/>
            <person name="Wincker P."/>
            <person name="Cattolico L."/>
            <person name="Weissenbach J."/>
            <person name="Saurin W."/>
            <person name="Quetier F."/>
            <person name="Schaefer M."/>
            <person name="Mueller-Auer S."/>
            <person name="Gabel C."/>
            <person name="Fuchs M."/>
            <person name="Benes V."/>
            <person name="Wurmbach E."/>
            <person name="Drzonek H."/>
            <person name="Erfle H."/>
            <person name="Jordan N."/>
            <person name="Bangert S."/>
            <person name="Wiedelmann R."/>
            <person name="Kranz H."/>
            <person name="Voss H."/>
            <person name="Holland R."/>
            <person name="Brandt P."/>
            <person name="Nyakatura G."/>
            <person name="Vezzi A."/>
            <person name="D'Angelo M."/>
            <person name="Pallavicini A."/>
            <person name="Toppo S."/>
            <person name="Simionati B."/>
            <person name="Conrad A."/>
            <person name="Hornischer K."/>
            <person name="Kauer G."/>
            <person name="Loehnert T.-H."/>
            <person name="Nordsiek G."/>
            <person name="Reichelt J."/>
            <person name="Scharfe M."/>
            <person name="Schoen O."/>
            <person name="Bargues M."/>
            <person name="Terol J."/>
            <person name="Climent J."/>
            <person name="Navarro P."/>
            <person name="Collado C."/>
            <person name="Perez-Perez A."/>
            <person name="Ottenwaelder B."/>
            <person name="Duchemin D."/>
            <person name="Cooke R."/>
            <person name="Laudie M."/>
            <person name="Berger-Llauro C."/>
            <person name="Purnelle B."/>
            <person name="Masuy D."/>
            <person name="de Haan M."/>
            <person name="Maarse A.C."/>
            <person name="Alcaraz J.-P."/>
            <person name="Cottet A."/>
            <person name="Casacuberta E."/>
            <person name="Monfort A."/>
            <person name="Argiriou A."/>
            <person name="Flores M."/>
            <person name="Liguori R."/>
            <person name="Vitale D."/>
            <person name="Mannhaupt G."/>
            <person name="Haase D."/>
            <person name="Schoof H."/>
            <person name="Rudd S."/>
            <person name="Zaccaria P."/>
            <person name="Mewes H.-W."/>
            <person name="Mayer K.F.X."/>
            <person name="Kaul S."/>
            <person name="Town C.D."/>
            <person name="Koo H.L."/>
            <person name="Tallon L.J."/>
            <person name="Jenkins J."/>
            <person name="Rooney T."/>
            <person name="Rizzo M."/>
            <person name="Walts A."/>
            <person name="Utterback T."/>
            <person name="Fujii C.Y."/>
            <person name="Shea T.P."/>
            <person name="Creasy T.H."/>
            <person name="Haas B."/>
            <person name="Maiti R."/>
            <person name="Wu D."/>
            <person name="Peterson J."/>
            <person name="Van Aken S."/>
            <person name="Pai G."/>
            <person name="Militscher J."/>
            <person name="Sellers P."/>
            <person name="Gill J.E."/>
            <person name="Feldblyum T.V."/>
            <person name="Preuss D."/>
            <person name="Lin X."/>
            <person name="Nierman W.C."/>
            <person name="Salzberg S.L."/>
            <person name="White O."/>
            <person name="Venter J.C."/>
            <person name="Fraser C.M."/>
            <person name="Kaneko T."/>
            <person name="Nakamura Y."/>
            <person name="Sato S."/>
            <person name="Kato T."/>
            <person name="Asamizu E."/>
            <person name="Sasamoto S."/>
            <person name="Kimura T."/>
            <person name="Idesawa K."/>
            <person name="Kawashima K."/>
            <person name="Kishida Y."/>
            <person name="Kiyokawa C."/>
            <person name="Kohara M."/>
            <person name="Matsumoto M."/>
            <person name="Matsuno A."/>
            <person name="Muraki A."/>
            <person name="Nakayama S."/>
            <person name="Nakazaki N."/>
            <person name="Shinpo S."/>
            <person name="Takeuchi C."/>
            <person name="Wada T."/>
            <person name="Watanabe A."/>
            <person name="Yamada M."/>
            <person name="Yasuda M."/>
            <person name="Tabata S."/>
        </authorList>
    </citation>
    <scope>NUCLEOTIDE SEQUENCE [LARGE SCALE GENOMIC DNA]</scope>
    <source>
        <strain>cv. Columbia</strain>
    </source>
</reference>
<reference key="3">
    <citation type="journal article" date="2017" name="Plant J.">
        <title>Araport11: a complete reannotation of the Arabidopsis thaliana reference genome.</title>
        <authorList>
            <person name="Cheng C.Y."/>
            <person name="Krishnakumar V."/>
            <person name="Chan A.P."/>
            <person name="Thibaud-Nissen F."/>
            <person name="Schobel S."/>
            <person name="Town C.D."/>
        </authorList>
    </citation>
    <scope>GENOME REANNOTATION</scope>
    <source>
        <strain>cv. Columbia</strain>
    </source>
</reference>
<reference key="4">
    <citation type="journal article" date="2003" name="Science">
        <title>Empirical analysis of transcriptional activity in the Arabidopsis genome.</title>
        <authorList>
            <person name="Yamada K."/>
            <person name="Lim J."/>
            <person name="Dale J.M."/>
            <person name="Chen H."/>
            <person name="Shinn P."/>
            <person name="Palm C.J."/>
            <person name="Southwick A.M."/>
            <person name="Wu H.C."/>
            <person name="Kim C.J."/>
            <person name="Nguyen M."/>
            <person name="Pham P.K."/>
            <person name="Cheuk R.F."/>
            <person name="Karlin-Newmann G."/>
            <person name="Liu S.X."/>
            <person name="Lam B."/>
            <person name="Sakano H."/>
            <person name="Wu T."/>
            <person name="Yu G."/>
            <person name="Miranda M."/>
            <person name="Quach H.L."/>
            <person name="Tripp M."/>
            <person name="Chang C.H."/>
            <person name="Lee J.M."/>
            <person name="Toriumi M.J."/>
            <person name="Chan M.M."/>
            <person name="Tang C.C."/>
            <person name="Onodera C.S."/>
            <person name="Deng J.M."/>
            <person name="Akiyama K."/>
            <person name="Ansari Y."/>
            <person name="Arakawa T."/>
            <person name="Banh J."/>
            <person name="Banno F."/>
            <person name="Bowser L."/>
            <person name="Brooks S.Y."/>
            <person name="Carninci P."/>
            <person name="Chao Q."/>
            <person name="Choy N."/>
            <person name="Enju A."/>
            <person name="Goldsmith A.D."/>
            <person name="Gurjal M."/>
            <person name="Hansen N.F."/>
            <person name="Hayashizaki Y."/>
            <person name="Johnson-Hopson C."/>
            <person name="Hsuan V.W."/>
            <person name="Iida K."/>
            <person name="Karnes M."/>
            <person name="Khan S."/>
            <person name="Koesema E."/>
            <person name="Ishida J."/>
            <person name="Jiang P.X."/>
            <person name="Jones T."/>
            <person name="Kawai J."/>
            <person name="Kamiya A."/>
            <person name="Meyers C."/>
            <person name="Nakajima M."/>
            <person name="Narusaka M."/>
            <person name="Seki M."/>
            <person name="Sakurai T."/>
            <person name="Satou M."/>
            <person name="Tamse R."/>
            <person name="Vaysberg M."/>
            <person name="Wallender E.K."/>
            <person name="Wong C."/>
            <person name="Yamamura Y."/>
            <person name="Yuan S."/>
            <person name="Shinozaki K."/>
            <person name="Davis R.W."/>
            <person name="Theologis A."/>
            <person name="Ecker J.R."/>
        </authorList>
    </citation>
    <scope>NUCLEOTIDE SEQUENCE [LARGE SCALE MRNA]</scope>
    <source>
        <strain>cv. Columbia</strain>
    </source>
</reference>
<reference key="5">
    <citation type="journal article" date="1992" name="Proc. Natl. Acad. Sci. U.S.A.">
        <title>Light-induced phosphorylation of a membrane protein plays an early role in signal transduction for phototropism in Arabidopsis thaliana.</title>
        <authorList>
            <person name="Reymond P."/>
            <person name="Short T.W."/>
            <person name="Briggs W.R."/>
            <person name="Poff K.L."/>
        </authorList>
    </citation>
    <scope>PHOSPHORYLATION</scope>
</reference>
<reference evidence="40" key="6">
    <citation type="journal article" date="1998" name="Science">
        <title>Arabidopsis NPH1: a flavoprotein with the properties of a photoreceptor for phototropism.</title>
        <authorList>
            <person name="Christie J.M."/>
            <person name="Reymond P."/>
            <person name="Powell G.K."/>
            <person name="Bernasconi P."/>
            <person name="Raibekas A.A."/>
            <person name="Liscum E."/>
            <person name="Briggs W.R."/>
        </authorList>
    </citation>
    <scope>PHOSPHORYLATION</scope>
</reference>
<reference evidence="40" key="7">
    <citation type="journal article" date="1999" name="Proc. Natl. Acad. Sci. U.S.A.">
        <title>LOV (light, oxygen, or voltage) domains of the blue-light photoreceptor phototropin (nph1): binding sites for the chromophore flavin mononucleotide.</title>
        <authorList>
            <person name="Christie J.M."/>
            <person name="Salomon M."/>
            <person name="Nozue K."/>
            <person name="Wada M."/>
            <person name="Briggs W.R."/>
        </authorList>
    </citation>
    <scope>FMN-BINDING</scope>
</reference>
<reference key="8">
    <citation type="journal article" date="1999" name="Science">
        <title>Arabidopsis NPH3: a NPH1 photoreceptor-interacting protein essential for phototropism.</title>
        <authorList>
            <person name="Motchoulski A."/>
            <person name="Liscum E."/>
        </authorList>
    </citation>
    <scope>SUBCELLULAR LOCATION</scope>
    <scope>INTERACTION WITH RPT3</scope>
</reference>
<reference key="9">
    <citation type="journal article" date="2000" name="Plant Cell">
        <title>RPT2: a signal transducer of the phototropic response in Arabidopsis.</title>
        <authorList>
            <person name="Sakai T."/>
            <person name="Wada T."/>
            <person name="Ishiguro S."/>
            <person name="Okada K."/>
        </authorList>
    </citation>
    <scope>FUNCTION</scope>
</reference>
<reference key="10">
    <citation type="journal article" date="2001" name="Plant J.">
        <title>Unexpected roles for cryptochrome 2 and phototropin revealed by high-resolution analysis of blue light-mediated hypocotyl growth inhibition.</title>
        <authorList>
            <person name="Folta K.M."/>
            <person name="Spalding E.P."/>
        </authorList>
    </citation>
    <scope>FUNCTION</scope>
</reference>
<reference key="11">
    <citation type="journal article" date="2002" name="Plant J.">
        <title>Phototropin LOV domains exhibit distinct roles in regulating photoreceptor function.</title>
        <authorList>
            <person name="Christie J.M."/>
            <person name="Swartz T.E."/>
            <person name="Bogomolni R.A."/>
            <person name="Briggs W.R."/>
        </authorList>
    </citation>
    <scope>AUTOPHOSPHORYLATION</scope>
    <scope>MUTAGENESIS OF CYS-234 AND CYS-512</scope>
    <scope>CATALYTIC ACTIVITY</scope>
</reference>
<reference key="12">
    <citation type="journal article" date="2002" name="Plant Physiol.">
        <title>Photochemical properties of the flavin mononucleotide-binding domains of the phototropins from Arabidopsis, rice, and Chlamydomonas reinhardtii.</title>
        <authorList>
            <person name="Kasahara M."/>
            <person name="Swartz T.E."/>
            <person name="Olney M.A."/>
            <person name="Onodera A."/>
            <person name="Mochizuki N."/>
            <person name="Fukuzawa H."/>
            <person name="Asamizu E."/>
            <person name="Tabata S."/>
            <person name="Kanegae H."/>
            <person name="Takano M."/>
            <person name="Christie J.M."/>
            <person name="Nagatani A."/>
            <person name="Briggs W.R."/>
        </authorList>
    </citation>
    <scope>BIOPHYSICOCHEMICAL PROPERTIES</scope>
    <scope>MUTAGENESIS OF CYS-512</scope>
</reference>
<reference key="13">
    <citation type="journal article" date="2003" name="Plant Mol. Biol.">
        <title>Phototropin 1 is required for high-fluence blue-light-mediated mRNA destabilization.</title>
        <authorList>
            <person name="Folta K.M."/>
            <person name="Kaufman L.S."/>
        </authorList>
    </citation>
    <scope>FUNCTION</scope>
</reference>
<reference key="14">
    <citation type="journal article" date="2003" name="Proc. Natl. Acad. Sci. U.S.A.">
        <title>Phot1 and phot2 mediate blue light-induced transient increases in cytosolic Ca2+ differently in Arabidopsis leaves.</title>
        <authorList>
            <person name="Harada A."/>
            <person name="Sakai T."/>
            <person name="Okada K."/>
        </authorList>
    </citation>
    <scope>FUNCTION</scope>
    <scope>SUBCELLULAR LOCATION</scope>
</reference>
<reference key="15">
    <citation type="journal article" date="2003" name="Trends Plant Sci.">
        <title>Growth signalling pathways in Arabidopsis and the AGC protein kinases.</title>
        <authorList>
            <person name="Boegre L."/>
            <person name="Okresz L."/>
            <person name="Henriques R."/>
            <person name="Anthony R.G."/>
        </authorList>
    </citation>
    <scope>GENE FAMILY</scope>
    <scope>REVIEW</scope>
</reference>
<reference key="16">
    <citation type="journal article" date="2004" name="J. Exp. Bot.">
        <title>A transgene encoding a blue-light receptor, phot1, restores blue-light responses in the Arabidopsis phot1 phot2 double mutant.</title>
        <authorList>
            <person name="Doi M."/>
            <person name="Shigenaga A."/>
            <person name="Emi T."/>
            <person name="Kinoshita T."/>
            <person name="Shimazaki K."/>
        </authorList>
    </citation>
    <scope>FUNCTION</scope>
    <scope>DISRUPTION PHENOTYPE</scope>
    <source>
        <strain>cv. Columbia GL1</strain>
    </source>
</reference>
<reference key="17">
    <citation type="journal article" date="2004" name="Plant Cell">
        <title>RPT2 is a signal transducer involved in phototropic response and stomatal opening by association with phototropin 1 in Arabidopsis thaliana.</title>
        <authorList>
            <person name="Inada S."/>
            <person name="Ohgishi M."/>
            <person name="Mayama T."/>
            <person name="Okada K."/>
            <person name="Sakai T."/>
        </authorList>
    </citation>
    <scope>FUNCTION</scope>
    <scope>SUBCELLULAR LOCATION</scope>
    <scope>INTERACTION WITH RPT2</scope>
</reference>
<reference key="18">
    <citation type="journal article" date="2005" name="Plant Cell Physiol.">
        <title>Biochemical characterization of plasma membrane H+-ATPase activation in guard cell protoplasts of Arabidopsis thaliana in response to blue light.</title>
        <authorList>
            <person name="Ueno K."/>
            <person name="Kinoshita T."/>
            <person name="Inoue S."/>
            <person name="Emi T."/>
            <person name="Shimazaki K."/>
        </authorList>
    </citation>
    <scope>FUNCTION</scope>
    <scope>DISRUPTION PHENOTYPE</scope>
    <scope>TISSUE SPECIFICITY</scope>
    <source>
        <strain>cv. Columbia GL1</strain>
    </source>
</reference>
<reference key="19">
    <citation type="journal article" date="2004" name="Proc. Natl. Acad. Sci. U.S.A.">
        <title>Functional analysis of each blue light receptor, cry1, cry2, phot1, and phot2, by using combinatorial multiple mutants in Arabidopsis.</title>
        <authorList>
            <person name="Ohgishi M."/>
            <person name="Saji K."/>
            <person name="Okada K."/>
            <person name="Sakai T."/>
        </authorList>
    </citation>
    <scope>FUNCTION</scope>
</reference>
<reference key="20">
    <citation type="journal article" date="2006" name="Proc. Natl. Acad. Sci. U.S.A.">
        <title>PHYTOCHROME KINASE SUBSTRATE 1 is a phototropin 1 binding protein required for phototropism.</title>
        <authorList>
            <person name="Lariguet P."/>
            <person name="Schepens I."/>
            <person name="Hodgson D."/>
            <person name="Pedmale U.V."/>
            <person name="Trevisan M."/>
            <person name="Kami C."/>
            <person name="de Carbonnel M."/>
            <person name="Alonso J.M."/>
            <person name="Ecker J.R."/>
            <person name="Liscum E."/>
            <person name="Fankhauser C."/>
        </authorList>
    </citation>
    <scope>FUNCTION</scope>
    <scope>INTERACTION WITH PKS1</scope>
    <scope>PHOSPHORYLATION</scope>
    <scope>SUBCELLULAR LOCATION</scope>
    <scope>CATALYTIC ACTIVITY</scope>
</reference>
<reference key="21">
    <citation type="journal article" date="2008" name="Mol. Plant">
        <title>In vivo phosphorylation site mapping and functional characterization of Arabidopsis phototropin 1.</title>
        <authorList>
            <person name="Sullivan S."/>
            <person name="Thomson C.E."/>
            <person name="Lamont D.J."/>
            <person name="Jones M.A."/>
            <person name="Christie J.M."/>
        </authorList>
    </citation>
    <scope>FUNCTION</scope>
    <scope>DISRUPTION PHENOTYPE</scope>
    <scope>PHOSPHORYLATION AT SER-58; SER-185; SER-350 AND SER-410</scope>
    <scope>FMN BINDING</scope>
    <scope>AUTOPHOSPHORYLATION</scope>
    <scope>SUBCELLULAR LOCATION</scope>
    <scope>CATALYTIC ACTIVITY</scope>
</reference>
<reference key="22">
    <citation type="journal article" date="2009" name="Plant Physiol.">
        <title>Large-scale Arabidopsis phosphoproteome profiling reveals novel chloroplast kinase substrates and phosphorylation networks.</title>
        <authorList>
            <person name="Reiland S."/>
            <person name="Messerli G."/>
            <person name="Baerenfaller K."/>
            <person name="Gerrits B."/>
            <person name="Endler A."/>
            <person name="Grossmann J."/>
            <person name="Gruissem W."/>
            <person name="Baginsky S."/>
        </authorList>
    </citation>
    <scope>PHOSPHORYLATION [LARGE SCALE ANALYSIS] AT SER-350; SER-376 AND SER-450</scope>
    <scope>IDENTIFICATION BY MASS SPECTROMETRY [LARGE SCALE ANALYSIS]</scope>
</reference>
<reference key="23">
    <citation type="journal article" date="2010" name="Plant Physiol.">
        <title>The Arabidopsis PHYTOCHROME KINASE SUBSTRATE2 protein is a phototropin signaling element that regulates leaf flattening and leaf positioning.</title>
        <authorList>
            <person name="de Carbonnel M."/>
            <person name="Davis P."/>
            <person name="Roelfsema M.R."/>
            <person name="Inoue S."/>
            <person name="Schepens I."/>
            <person name="Lariguet P."/>
            <person name="Geisler M."/>
            <person name="Shimazaki K."/>
            <person name="Hangarter R."/>
            <person name="Fankhauser C."/>
        </authorList>
    </citation>
    <scope>INTERACTION WITH PKS1; PKS2; RPT3 AND PHOT2</scope>
</reference>
<reference key="24">
    <citation type="journal article" date="2011" name="Plant Physiol.">
        <title>A negative effector of blue light-induced and gravitropic bending in Arabidopsis.</title>
        <authorList>
            <person name="Knauer T."/>
            <person name="Duemmer M."/>
            <person name="Landgraf F."/>
            <person name="Forreiter C."/>
        </authorList>
    </citation>
    <scope>INTERACTION WITH RPT3/NPH3 AND CAR6</scope>
</reference>
<reference key="25">
    <citation type="journal article" date="2013" name="Nat. Commun.">
        <title>Phosphorylation of BLUS1 kinase by phototropins is a primary step in stomatal opening.</title>
        <authorList>
            <person name="Takemiya A."/>
            <person name="Sugiyama N."/>
            <person name="Fujimoto H."/>
            <person name="Tsutsumi T."/>
            <person name="Yamauchi S."/>
            <person name="Hiyama A."/>
            <person name="Tada Y."/>
            <person name="Christie J.M."/>
            <person name="Shimazaki K."/>
        </authorList>
    </citation>
    <scope>FUNCTION</scope>
    <scope>INTERACTION WITH BLUS1</scope>
    <scope>CATALYTIC ACTIVITY</scope>
</reference>
<reference key="26">
    <citation type="journal article" date="2017" name="Nat. Commun.">
        <title>Blue light and CO2 signals converge to regulate light-induced stomatal opening.</title>
        <authorList>
            <person name="Hiyama A."/>
            <person name="Takemiya A."/>
            <person name="Munemasa S."/>
            <person name="Okuma E."/>
            <person name="Sugiyama N."/>
            <person name="Tada Y."/>
            <person name="Murata Y."/>
            <person name="Shimazaki K.-I."/>
        </authorList>
    </citation>
    <scope>FUNCTION</scope>
    <scope>MUTAGENESIS OF ASP-806</scope>
    <scope>CATALYTIC ACTIVITY</scope>
</reference>
<reference key="27">
    <citation type="journal article" date="2017" name="Sci. Rep.">
        <title>A Raf-like protein kinase BHP mediates blue light-dependent stomatal opening.</title>
        <authorList>
            <person name="Hayashi M."/>
            <person name="Inoue S.-I."/>
            <person name="Ueno Y."/>
            <person name="Kinoshita T."/>
        </authorList>
    </citation>
    <scope>PHOSPHORYLATION</scope>
    <scope>ACTIVITY REGULATION</scope>
    <scope>INTERACTION WITH BHP</scope>
    <source>
        <strain>cv. Columbia</strain>
    </source>
</reference>
<reference key="28">
    <citation type="journal article" date="2020" name="Photochem. Photobiol. Sci.">
        <title>Raf-like kinases CBC1 and CBC2 negatively regulate stomatal opening by negatively regulating plasma membrane H+-ATPase phosphorylation in Arabidopsis.</title>
        <authorList>
            <person name="Hayashi M."/>
            <person name="Sugimoto H."/>
            <person name="Takahashi H."/>
            <person name="Seki M."/>
            <person name="Shinozaki K."/>
            <person name="Sawasaki T."/>
            <person name="Kinoshita T."/>
            <person name="Inoue S.-I."/>
        </authorList>
    </citation>
    <scope>FUNCTION</scope>
    <scope>DISRUPTION PHENOTYPE</scope>
    <scope>INTERACTION WITH CBC1 AND CBC2</scope>
    <scope>CATALYTIC ACTIVITY</scope>
    <source>
        <strain>cv. Columbia</strain>
    </source>
</reference>
<reference key="29">
    <citation type="journal article" date="2020" name="Plant Physiol.">
        <title>An ATP-binding cassette transporter, ABCB19, regulates leaf position and morphology during phototropin1-mediated blue light responses.</title>
        <authorList>
            <person name="Jenness M.K."/>
            <person name="Tayengwa R."/>
            <person name="Murphy A.S."/>
        </authorList>
    </citation>
    <scope>FUNCTION</scope>
    <scope>DISRUPTION PHENOTYPE</scope>
    <source>
        <strain>cv. Columbia</strain>
        <strain>cv. Columbia GL1</strain>
    </source>
</reference>
<reference key="30">
    <citation type="journal article" date="2008" name="J. Mol. Biol.">
        <title>Structural basis of the LOV1 dimerization of Arabidopsis phototropins 1 and 2.</title>
        <authorList>
            <person name="Nakasako M."/>
            <person name="Zikihara K."/>
            <person name="Matsuoka D."/>
            <person name="Katsura H."/>
            <person name="Tokutomi S."/>
        </authorList>
    </citation>
    <scope>X-RAY CRYSTALLOGRAPHY (2.1 ANGSTROMS) OF 180-308 IN COMPLEX WITH FMN</scope>
    <scope>SUBUNIT</scope>
    <scope>DISULFIDE BONDS</scope>
</reference>
<reference key="31">
    <citation type="journal article" date="2013" name="Acta Crystallogr. F">
        <title>Coiled-coil dimerization of the LOV2 domain of the blue-light photoreceptor phototropin 1 from Arabidopsis thaliana.</title>
        <authorList>
            <person name="Halavaty A.S."/>
            <person name="Moffat K."/>
        </authorList>
    </citation>
    <scope>X-RAY CRYSTALLOGRAPHY (2.75 ANGSTROMS) OF 452-615 IN COMPLEX WITH FMN</scope>
    <scope>SUBUNIT</scope>
</reference>
<gene>
    <name evidence="36" type="primary">PHOT1</name>
    <name type="synonym">JK224</name>
    <name evidence="39" type="synonym">NPH1</name>
    <name evidence="35" type="synonym">RPT1</name>
    <name evidence="42" type="ordered locus">At3g45780</name>
    <name evidence="43" type="ORF">T6D9_110</name>
</gene>
<name>PHOT1_ARATH</name>
<protein>
    <recommendedName>
        <fullName evidence="36">Phototropin-1</fullName>
        <ecNumber evidence="22 24 27 30 38">2.7.11.1</ecNumber>
    </recommendedName>
    <alternativeName>
        <fullName evidence="39">Non-phototropic hypocotyl protein 1</fullName>
    </alternativeName>
    <alternativeName>
        <fullName evidence="35">Root phototropism protein 1</fullName>
    </alternativeName>
</protein>
<comment type="function">
    <text evidence="11 12 16 17 18 19 20 21 22 24 27 30 31 32 37 38">Protein kinase that acts as a blue light (BL) photoreceptor in a signal-transduction pathway for photo-induced movements (PubMed:14739272, PubMed:15821287, PubMed:29101334, PubMed:31904040, PubMed:32855213). Triggers the phosphorylation of AHA1 and AHA2 C-terminal penultimate Thr in guard cells to activate them and induce stomatal opening in response to blue light (BL) (PubMed:15821287, PubMed:31904040). Also phosphorylates BLUS1, a kinase involved in stomatal opening (PubMed:23811955). Mediates the phosphorylation of CBC1 in stomata, but not of CBC2, in response to blue light (PubMed:29101334). Required for blue light mediated mRNA destabilization. Mediates calcium spiking of extracellular origin in response to a low rate of blue light. Also mediates rapid membrane depolarization and growth inhibition in response to blue light. Necessary for root phototropism. Involved in hypocotyl phototropism under a low rate but not under a high rate of blue light. Contributes to the chloroplast accumulation but seems not to be required for chloroplast translocation. Regulates stomata opening and photomorphogenesis response of leaf tissue. Confers sensitivity to drought. Not involved in hypocotyl elongation inhibition, anthocyanin accumulation or cotyledon opening. Involved in the regulation of leaf position and morphology via the phosphorylation of ABCB19 during blue light responses to modulate auxin distribution (PubMed:32855213).</text>
</comment>
<comment type="catalytic activity">
    <reaction evidence="22 24 27 30">
        <text>L-seryl-[protein] + ATP = O-phospho-L-seryl-[protein] + ADP + H(+)</text>
        <dbReference type="Rhea" id="RHEA:17989"/>
        <dbReference type="Rhea" id="RHEA-COMP:9863"/>
        <dbReference type="Rhea" id="RHEA-COMP:11604"/>
        <dbReference type="ChEBI" id="CHEBI:15378"/>
        <dbReference type="ChEBI" id="CHEBI:29999"/>
        <dbReference type="ChEBI" id="CHEBI:30616"/>
        <dbReference type="ChEBI" id="CHEBI:83421"/>
        <dbReference type="ChEBI" id="CHEBI:456216"/>
        <dbReference type="EC" id="2.7.11.1"/>
    </reaction>
</comment>
<comment type="catalytic activity">
    <reaction evidence="38">
        <text>L-threonyl-[protein] + ATP = O-phospho-L-threonyl-[protein] + ADP + H(+)</text>
        <dbReference type="Rhea" id="RHEA:46608"/>
        <dbReference type="Rhea" id="RHEA-COMP:11060"/>
        <dbReference type="Rhea" id="RHEA-COMP:11605"/>
        <dbReference type="ChEBI" id="CHEBI:15378"/>
        <dbReference type="ChEBI" id="CHEBI:30013"/>
        <dbReference type="ChEBI" id="CHEBI:30616"/>
        <dbReference type="ChEBI" id="CHEBI:61977"/>
        <dbReference type="ChEBI" id="CHEBI:456216"/>
        <dbReference type="EC" id="2.7.11.1"/>
    </reaction>
</comment>
<comment type="cofactor">
    <cofactor evidence="23 28">
        <name>FMN</name>
        <dbReference type="ChEBI" id="CHEBI:58210"/>
    </cofactor>
    <text evidence="23 28">Binds 2 FMN per subunit.</text>
</comment>
<comment type="activity regulation">
    <text evidence="29">Autophosphorylation is inhibited by staurosporine, but not by tyrphostin 9, sphingosine, GW5074 and BML-265.</text>
</comment>
<comment type="biophysicochemical properties">
    <absorption>
        <max evidence="14">450 nm</max>
        <text evidence="14">Exhibits a smaller absorbance peak at 350 nm. The broad fluorescence emission spectrum peaks at 490 nm.</text>
    </absorption>
</comment>
<comment type="subunit">
    <text evidence="10 20 22 23 25 26 27 28 29 31">Homodimer; disulfide-linked (PubMed:18585389, PubMed:24316821). Interacts with PKS1, PKS2, RPT2, RPT3, PHOT2 and BLUS1 (PubMed:10542152, PubMed:15031408, PubMed:16777956, PubMed:18585389, PubMed:20071603, PubMed:23811955). Subunit of a complex made of CAR6, PHOT1 and RPT3/NPH3 (PubMed:21367967). Associates with CBC1 and CBC2 (PubMed:31904040). Binds to BHP (PubMed:28358053).</text>
</comment>
<comment type="interaction">
    <interactant intactId="EBI-1553849">
        <id>O48963</id>
    </interactant>
    <interactant intactId="EBI-1633785">
        <id>P48349</id>
        <label>GRF6</label>
    </interactant>
    <organismsDiffer>false</organismsDiffer>
    <experiments>6</experiments>
</comment>
<comment type="interaction">
    <interactant intactId="EBI-1553849">
        <id>O48963</id>
    </interactant>
    <interactant intactId="EBI-1553849">
        <id>O48963</id>
        <label>PHOT1</label>
    </interactant>
    <organismsDiffer>false</organismsDiffer>
    <experiments>5</experiments>
</comment>
<comment type="interaction">
    <interactant intactId="EBI-1553849">
        <id>O48963</id>
    </interactant>
    <interactant intactId="EBI-626200">
        <id>Q9SWI1</id>
        <label>PKS1</label>
    </interactant>
    <organismsDiffer>false</organismsDiffer>
    <experiments>3</experiments>
</comment>
<comment type="interaction">
    <interactant intactId="EBI-1553849">
        <id>O48963</id>
    </interactant>
    <interactant intactId="EBI-1553842">
        <id>Q9FMF5</id>
        <label>RPT3</label>
    </interactant>
    <organismsDiffer>false</organismsDiffer>
    <experiments>3</experiments>
</comment>
<comment type="subcellular location">
    <subcellularLocation>
        <location>Cell membrane</location>
        <topology>Peripheral membrane protein</topology>
    </subcellularLocation>
    <subcellularLocation>
        <location>Cytoplasm</location>
    </subcellularLocation>
</comment>
<comment type="tissue specificity">
    <text evidence="21">Present in guard cells (at protein level).</text>
</comment>
<comment type="domain">
    <text evidence="1 3 41">The activation loop within the kinase domain is the target of phosphorylation (By similarity). The PAS (PER-ARNT-SIM) domains are required for the binding of FMN chromophores (Probable).</text>
</comment>
<comment type="PTM">
    <text evidence="13 22 24 29 34 40">Autophosphorylated at Ser-185, Ser-350 and Ser-410 in response to blue light irradiation.</text>
</comment>
<comment type="PTM">
    <text evidence="9">2 molecules of FMN bind covalently to cysteines after exposure to blue light and are reversed in the dark.</text>
</comment>
<comment type="disruption phenotype">
    <text evidence="18 21 24 31 32">Enhanced drought tolerance, when associated with PHOT2 disruption (PubMed:20031924). Plants lacking both PHOT1 and PHOT2 have curled downward leaves missing color changes and lower petiole angles in response to weak or strong blue light (BL) (PubMed:14739272, PubMed:31904040, PubMed:32855213). Impaired proton H(+) pumping associated with altered increased ATP hydrolysis and absence of binding between 14-3-3 protein and H(+)-ATPase (e.g. AHA1 and AHA2) in response to BL in guard cells of plants missing PHOT1 and PHOT2 (PubMed:15821287).</text>
</comment>
<comment type="miscellaneous">
    <text>Undergoes a photocycle characterized by fluorescence and absorption changes induced by blue light. Half-time of photoproduct formation is 14 seconds and 70 seconds for dark regeneration.</text>
</comment>
<comment type="similarity">
    <text evidence="40">Belongs to the protein kinase superfamily. AGC Ser/Thr protein kinase family.</text>
</comment>
<keyword id="KW-0002">3D-structure</keyword>
<keyword id="KW-0067">ATP-binding</keyword>
<keyword id="KW-1003">Cell membrane</keyword>
<keyword id="KW-0157">Chromophore</keyword>
<keyword id="KW-0963">Cytoplasm</keyword>
<keyword id="KW-1015">Disulfide bond</keyword>
<keyword id="KW-0285">Flavoprotein</keyword>
<keyword id="KW-0288">FMN</keyword>
<keyword id="KW-0418">Kinase</keyword>
<keyword id="KW-0472">Membrane</keyword>
<keyword id="KW-0547">Nucleotide-binding</keyword>
<keyword id="KW-0597">Phosphoprotein</keyword>
<keyword id="KW-0600">Photoreceptor protein</keyword>
<keyword id="KW-0675">Receptor</keyword>
<keyword id="KW-1185">Reference proteome</keyword>
<keyword id="KW-0677">Repeat</keyword>
<keyword id="KW-0716">Sensory transduction</keyword>
<keyword id="KW-0723">Serine/threonine-protein kinase</keyword>
<keyword id="KW-0808">Transferase</keyword>
<organism>
    <name type="scientific">Arabidopsis thaliana</name>
    <name type="common">Mouse-ear cress</name>
    <dbReference type="NCBI Taxonomy" id="3702"/>
    <lineage>
        <taxon>Eukaryota</taxon>
        <taxon>Viridiplantae</taxon>
        <taxon>Streptophyta</taxon>
        <taxon>Embryophyta</taxon>
        <taxon>Tracheophyta</taxon>
        <taxon>Spermatophyta</taxon>
        <taxon>Magnoliopsida</taxon>
        <taxon>eudicotyledons</taxon>
        <taxon>Gunneridae</taxon>
        <taxon>Pentapetalae</taxon>
        <taxon>rosids</taxon>
        <taxon>malvids</taxon>
        <taxon>Brassicales</taxon>
        <taxon>Brassicaceae</taxon>
        <taxon>Camelineae</taxon>
        <taxon>Arabidopsis</taxon>
    </lineage>
</organism>
<proteinExistence type="evidence at protein level"/>
<dbReference type="EC" id="2.7.11.1" evidence="22 24 27 30 38"/>
<dbReference type="EMBL" id="AF030864">
    <property type="protein sequence ID" value="AAC01753.1"/>
    <property type="molecule type" value="mRNA"/>
</dbReference>
<dbReference type="EMBL" id="AL157735">
    <property type="protein sequence ID" value="CAB75791.1"/>
    <property type="molecule type" value="Genomic_DNA"/>
</dbReference>
<dbReference type="EMBL" id="CP002686">
    <property type="protein sequence ID" value="AEE78072.1"/>
    <property type="molecule type" value="Genomic_DNA"/>
</dbReference>
<dbReference type="EMBL" id="CP002686">
    <property type="protein sequence ID" value="AEE78073.1"/>
    <property type="molecule type" value="Genomic_DNA"/>
</dbReference>
<dbReference type="EMBL" id="AF360218">
    <property type="protein sequence ID" value="AAK25928.1"/>
    <property type="molecule type" value="mRNA"/>
</dbReference>
<dbReference type="EMBL" id="AY040062">
    <property type="protein sequence ID" value="AAK64120.1"/>
    <property type="molecule type" value="mRNA"/>
</dbReference>
<dbReference type="PIR" id="T47518">
    <property type="entry name" value="T47518"/>
</dbReference>
<dbReference type="RefSeq" id="NP_001030814.1">
    <property type="nucleotide sequence ID" value="NM_001035737.2"/>
</dbReference>
<dbReference type="RefSeq" id="NP_190164.1">
    <property type="nucleotide sequence ID" value="NM_114447.4"/>
</dbReference>
<dbReference type="PDB" id="2Z6C">
    <property type="method" value="X-ray"/>
    <property type="resolution" value="2.10 A"/>
    <property type="chains" value="A/B=180-308"/>
</dbReference>
<dbReference type="PDB" id="4HHD">
    <property type="method" value="X-ray"/>
    <property type="resolution" value="2.75 A"/>
    <property type="chains" value="A/B=452-615"/>
</dbReference>
<dbReference type="PDBsum" id="2Z6C"/>
<dbReference type="PDBsum" id="4HHD"/>
<dbReference type="SMR" id="O48963"/>
<dbReference type="BioGRID" id="9041">
    <property type="interactions" value="13"/>
</dbReference>
<dbReference type="DIP" id="DIP-38655N"/>
<dbReference type="FunCoup" id="O48963">
    <property type="interactions" value="621"/>
</dbReference>
<dbReference type="IntAct" id="O48963">
    <property type="interactions" value="15"/>
</dbReference>
<dbReference type="MINT" id="O48963"/>
<dbReference type="STRING" id="3702.O48963"/>
<dbReference type="iPTMnet" id="O48963"/>
<dbReference type="PaxDb" id="3702-AT3G45780.2"/>
<dbReference type="ProteomicsDB" id="236731"/>
<dbReference type="EnsemblPlants" id="AT3G45780.1">
    <property type="protein sequence ID" value="AT3G45780.1"/>
    <property type="gene ID" value="AT3G45780"/>
</dbReference>
<dbReference type="EnsemblPlants" id="AT3G45780.2">
    <property type="protein sequence ID" value="AT3G45780.2"/>
    <property type="gene ID" value="AT3G45780"/>
</dbReference>
<dbReference type="GeneID" id="823721"/>
<dbReference type="Gramene" id="AT3G45780.1">
    <property type="protein sequence ID" value="AT3G45780.1"/>
    <property type="gene ID" value="AT3G45780"/>
</dbReference>
<dbReference type="Gramene" id="AT3G45780.2">
    <property type="protein sequence ID" value="AT3G45780.2"/>
    <property type="gene ID" value="AT3G45780"/>
</dbReference>
<dbReference type="KEGG" id="ath:AT3G45780"/>
<dbReference type="Araport" id="AT3G45780"/>
<dbReference type="TAIR" id="AT3G45780">
    <property type="gene designation" value="PHOT1"/>
</dbReference>
<dbReference type="eggNOG" id="ENOG502QPPH">
    <property type="taxonomic scope" value="Eukaryota"/>
</dbReference>
<dbReference type="HOGENOM" id="CLU_006321_1_1_1"/>
<dbReference type="InParanoid" id="O48963"/>
<dbReference type="OMA" id="IMKRPRA"/>
<dbReference type="PhylomeDB" id="O48963"/>
<dbReference type="BRENDA" id="2.7.11.1">
    <property type="organism ID" value="399"/>
</dbReference>
<dbReference type="EvolutionaryTrace" id="O48963"/>
<dbReference type="PRO" id="PR:O48963"/>
<dbReference type="Proteomes" id="UP000006548">
    <property type="component" value="Chromosome 3"/>
</dbReference>
<dbReference type="ExpressionAtlas" id="O48963">
    <property type="expression patterns" value="baseline and differential"/>
</dbReference>
<dbReference type="GO" id="GO:0009986">
    <property type="term" value="C:cell surface"/>
    <property type="evidence" value="ECO:0000314"/>
    <property type="project" value="TAIR"/>
</dbReference>
<dbReference type="GO" id="GO:0005737">
    <property type="term" value="C:cytoplasm"/>
    <property type="evidence" value="ECO:0000314"/>
    <property type="project" value="TAIR"/>
</dbReference>
<dbReference type="GO" id="GO:0009898">
    <property type="term" value="C:cytoplasmic side of plasma membrane"/>
    <property type="evidence" value="ECO:0000314"/>
    <property type="project" value="TAIR"/>
</dbReference>
<dbReference type="GO" id="GO:0000325">
    <property type="term" value="C:plant-type vacuole"/>
    <property type="evidence" value="ECO:0007005"/>
    <property type="project" value="TAIR"/>
</dbReference>
<dbReference type="GO" id="GO:0005524">
    <property type="term" value="F:ATP binding"/>
    <property type="evidence" value="ECO:0007669"/>
    <property type="project" value="UniProtKB-KW"/>
</dbReference>
<dbReference type="GO" id="GO:0009882">
    <property type="term" value="F:blue light photoreceptor activity"/>
    <property type="evidence" value="ECO:0000314"/>
    <property type="project" value="TAIR"/>
</dbReference>
<dbReference type="GO" id="GO:0010181">
    <property type="term" value="F:FMN binding"/>
    <property type="evidence" value="ECO:0000314"/>
    <property type="project" value="UniProtKB"/>
</dbReference>
<dbReference type="GO" id="GO:0042802">
    <property type="term" value="F:identical protein binding"/>
    <property type="evidence" value="ECO:0000353"/>
    <property type="project" value="UniProtKB"/>
</dbReference>
<dbReference type="GO" id="GO:0016301">
    <property type="term" value="F:kinase activity"/>
    <property type="evidence" value="ECO:0000250"/>
    <property type="project" value="TAIR"/>
</dbReference>
<dbReference type="GO" id="GO:0003729">
    <property type="term" value="F:mRNA binding"/>
    <property type="evidence" value="ECO:0007005"/>
    <property type="project" value="TAIR"/>
</dbReference>
<dbReference type="GO" id="GO:0004672">
    <property type="term" value="F:protein kinase activity"/>
    <property type="evidence" value="ECO:0000314"/>
    <property type="project" value="TAIR"/>
</dbReference>
<dbReference type="GO" id="GO:0106310">
    <property type="term" value="F:protein serine kinase activity"/>
    <property type="evidence" value="ECO:0007669"/>
    <property type="project" value="RHEA"/>
</dbReference>
<dbReference type="GO" id="GO:0004674">
    <property type="term" value="F:protein serine/threonine kinase activity"/>
    <property type="evidence" value="ECO:0000314"/>
    <property type="project" value="TAIR"/>
</dbReference>
<dbReference type="GO" id="GO:0071483">
    <property type="term" value="P:cellular response to blue light"/>
    <property type="evidence" value="ECO:0000315"/>
    <property type="project" value="UniProtKB"/>
</dbReference>
<dbReference type="GO" id="GO:0009904">
    <property type="term" value="P:chloroplast accumulation movement"/>
    <property type="evidence" value="ECO:0000315"/>
    <property type="project" value="TAIR"/>
</dbReference>
<dbReference type="GO" id="GO:0009903">
    <property type="term" value="P:chloroplast avoidance movement"/>
    <property type="evidence" value="ECO:0000315"/>
    <property type="project" value="TAIR"/>
</dbReference>
<dbReference type="GO" id="GO:0007623">
    <property type="term" value="P:circadian rhythm"/>
    <property type="evidence" value="ECO:0000315"/>
    <property type="project" value="TAIR"/>
</dbReference>
<dbReference type="GO" id="GO:0009638">
    <property type="term" value="P:phototropism"/>
    <property type="evidence" value="ECO:0000315"/>
    <property type="project" value="TAIR"/>
</dbReference>
<dbReference type="GO" id="GO:0046777">
    <property type="term" value="P:protein autophosphorylation"/>
    <property type="evidence" value="ECO:0000314"/>
    <property type="project" value="TAIR"/>
</dbReference>
<dbReference type="GO" id="GO:0010155">
    <property type="term" value="P:regulation of proton transport"/>
    <property type="evidence" value="ECO:0000316"/>
    <property type="project" value="TAIR"/>
</dbReference>
<dbReference type="GO" id="GO:0010119">
    <property type="term" value="P:regulation of stomatal movement"/>
    <property type="evidence" value="ECO:0000315"/>
    <property type="project" value="TAIR"/>
</dbReference>
<dbReference type="GO" id="GO:0009637">
    <property type="term" value="P:response to blue light"/>
    <property type="evidence" value="ECO:0000315"/>
    <property type="project" value="UniProtKB"/>
</dbReference>
<dbReference type="CDD" id="cd00130">
    <property type="entry name" value="PAS"/>
    <property type="match status" value="2"/>
</dbReference>
<dbReference type="CDD" id="cd05574">
    <property type="entry name" value="STKc_phototropin_like"/>
    <property type="match status" value="1"/>
</dbReference>
<dbReference type="FunFam" id="3.30.200.20:FF:000133">
    <property type="entry name" value="LOV domain-containing protein"/>
    <property type="match status" value="1"/>
</dbReference>
<dbReference type="FunFam" id="3.30.450.20:FF:000002">
    <property type="entry name" value="LOV domain-containing protein"/>
    <property type="match status" value="1"/>
</dbReference>
<dbReference type="FunFam" id="1.10.510.10:FF:000265">
    <property type="entry name" value="Putative LOV domain-containing protein"/>
    <property type="match status" value="1"/>
</dbReference>
<dbReference type="FunFam" id="3.30.450.20:FF:000036">
    <property type="entry name" value="Putative LOV domain-containing protein"/>
    <property type="match status" value="1"/>
</dbReference>
<dbReference type="Gene3D" id="3.30.450.20">
    <property type="entry name" value="PAS domain"/>
    <property type="match status" value="2"/>
</dbReference>
<dbReference type="Gene3D" id="3.30.200.20">
    <property type="entry name" value="Phosphorylase Kinase, domain 1"/>
    <property type="match status" value="1"/>
</dbReference>
<dbReference type="Gene3D" id="1.10.510.10">
    <property type="entry name" value="Transferase(Phosphotransferase) domain 1"/>
    <property type="match status" value="1"/>
</dbReference>
<dbReference type="InterPro" id="IPR011009">
    <property type="entry name" value="Kinase-like_dom_sf"/>
</dbReference>
<dbReference type="InterPro" id="IPR001610">
    <property type="entry name" value="PAC"/>
</dbReference>
<dbReference type="InterPro" id="IPR000014">
    <property type="entry name" value="PAS"/>
</dbReference>
<dbReference type="InterPro" id="IPR000700">
    <property type="entry name" value="PAS-assoc_C"/>
</dbReference>
<dbReference type="InterPro" id="IPR035965">
    <property type="entry name" value="PAS-like_dom_sf"/>
</dbReference>
<dbReference type="InterPro" id="IPR000719">
    <property type="entry name" value="Prot_kinase_dom"/>
</dbReference>
<dbReference type="InterPro" id="IPR017441">
    <property type="entry name" value="Protein_kinase_ATP_BS"/>
</dbReference>
<dbReference type="InterPro" id="IPR008271">
    <property type="entry name" value="Ser/Thr_kinase_AS"/>
</dbReference>
<dbReference type="NCBIfam" id="TIGR00229">
    <property type="entry name" value="sensory_box"/>
    <property type="match status" value="2"/>
</dbReference>
<dbReference type="PANTHER" id="PTHR45637">
    <property type="entry name" value="FLIPPASE KINASE 1-RELATED"/>
    <property type="match status" value="1"/>
</dbReference>
<dbReference type="Pfam" id="PF13426">
    <property type="entry name" value="PAS_9"/>
    <property type="match status" value="2"/>
</dbReference>
<dbReference type="Pfam" id="PF00069">
    <property type="entry name" value="Pkinase"/>
    <property type="match status" value="1"/>
</dbReference>
<dbReference type="SMART" id="SM00086">
    <property type="entry name" value="PAC"/>
    <property type="match status" value="2"/>
</dbReference>
<dbReference type="SMART" id="SM00091">
    <property type="entry name" value="PAS"/>
    <property type="match status" value="2"/>
</dbReference>
<dbReference type="SMART" id="SM00220">
    <property type="entry name" value="S_TKc"/>
    <property type="match status" value="1"/>
</dbReference>
<dbReference type="SUPFAM" id="SSF56112">
    <property type="entry name" value="Protein kinase-like (PK-like)"/>
    <property type="match status" value="1"/>
</dbReference>
<dbReference type="SUPFAM" id="SSF55785">
    <property type="entry name" value="PYP-like sensor domain (PAS domain)"/>
    <property type="match status" value="2"/>
</dbReference>
<dbReference type="PROSITE" id="PS50113">
    <property type="entry name" value="PAC"/>
    <property type="match status" value="2"/>
</dbReference>
<dbReference type="PROSITE" id="PS50112">
    <property type="entry name" value="PAS"/>
    <property type="match status" value="2"/>
</dbReference>
<dbReference type="PROSITE" id="PS00107">
    <property type="entry name" value="PROTEIN_KINASE_ATP"/>
    <property type="match status" value="1"/>
</dbReference>
<dbReference type="PROSITE" id="PS50011">
    <property type="entry name" value="PROTEIN_KINASE_DOM"/>
    <property type="match status" value="1"/>
</dbReference>
<dbReference type="PROSITE" id="PS00108">
    <property type="entry name" value="PROTEIN_KINASE_ST"/>
    <property type="match status" value="1"/>
</dbReference>
<sequence>MEPTEKPSTKPSSRTLPRDTRGSLEVFNPSTQLTRPDNPVFRPEPPAWQNLSDPRGTSPQPRPQQEPAPSNPVRSDQEIAVTTSWMALKDPSPETISKKTITAEKPQKSAVAAEQRAAEWGLVLKTDTKTGKPQGVGVRNSGGTENDPNGKKTTSQRNSQNSCRSSGEMSDGDVPGGRSGIPRVSEDLKDALSTFQQTFVVSDATKPDYPIMYASAGFFNMTGYTSKEVVGRNCRFLQGSGTDADELAKIRETLAAGNNYCGRILNYKKDGTSFWNLLTIAPIKDESGKVLKFIGMQVEVSKHTEGAKEKALRPNGLPESLIRYDARQKDMATNSVTELVEAVKRPRALSESTNLHPFMTKSESDELPKKPARRMSENVVPSGRRNSGGGRRNSMQRINEIPEKKSRKSSLSFMGIKKKSESLDESIDDGFIEYGEEDDEISDRDERPESVDDKVRQKEMRKGIDLATTLERIEKNFVITDPRLPDNPIIFASDSFLELTEYSREEILGRNCRFLQGPETDLTTVKKIRNAIDNQTEVTVQLINYTKSGKKFWNIFHLQPMRDQKGEVQYFIGVQLDGSKHVEPVRNVIEETAVKEGEDLVKKTAVNIDEAVRELPDANMTPEDLWANHSKVVHCKPHRKDSPPWIAIQKVLESGEPIGLKHFKPVKPLGSGDTGSVHLVELVGTDQLFAMKAMDKAVMLNRNKVHRARAEREILDLLDHPFLPALYASFQTKTHICLITDYYPGGELFMLLDRQPRKVLKEDAVRFYAAQVVVALEYLHCQGIIYRDLKPENVLIQGNGDISLSDFDLSCLTSCKPQLLIPSIDEKKKKKQQKSQQTPIFMAEPMRASNSFVGTEEYIAPEIISGAGHTSAVDWWALGILMYEMLYGYTPFRGKTRQKTFTNVLQKDLKFPASIPASLQVKQLIFRLLQRDPKKRLGCFEGANEVKQHSFFKGINWALIRCTNPPELETPIFSGEAENGEKVVDPELEDLQTNVF</sequence>
<evidence type="ECO:0000250" key="1"/>
<evidence type="ECO:0000250" key="2">
    <source>
        <dbReference type="UniProtKB" id="P93025"/>
    </source>
</evidence>
<evidence type="ECO:0000250" key="3">
    <source>
        <dbReference type="UniProtKB" id="Q9XF67"/>
    </source>
</evidence>
<evidence type="ECO:0000255" key="4">
    <source>
        <dbReference type="PROSITE-ProRule" id="PRU00140"/>
    </source>
</evidence>
<evidence type="ECO:0000255" key="5">
    <source>
        <dbReference type="PROSITE-ProRule" id="PRU00141"/>
    </source>
</evidence>
<evidence type="ECO:0000255" key="6">
    <source>
        <dbReference type="PROSITE-ProRule" id="PRU00159"/>
    </source>
</evidence>
<evidence type="ECO:0000255" key="7">
    <source>
        <dbReference type="PROSITE-ProRule" id="PRU10027"/>
    </source>
</evidence>
<evidence type="ECO:0000256" key="8">
    <source>
        <dbReference type="SAM" id="MobiDB-lite"/>
    </source>
</evidence>
<evidence type="ECO:0000269" key="9">
    <source>
    </source>
</evidence>
<evidence type="ECO:0000269" key="10">
    <source>
    </source>
</evidence>
<evidence type="ECO:0000269" key="11">
    <source>
    </source>
</evidence>
<evidence type="ECO:0000269" key="12">
    <source>
    </source>
</evidence>
<evidence type="ECO:0000269" key="13">
    <source>
    </source>
</evidence>
<evidence type="ECO:0000269" key="14">
    <source>
    </source>
</evidence>
<evidence type="ECO:0000269" key="15">
    <source>
    </source>
</evidence>
<evidence type="ECO:0000269" key="16">
    <source>
    </source>
</evidence>
<evidence type="ECO:0000269" key="17">
    <source>
    </source>
</evidence>
<evidence type="ECO:0000269" key="18">
    <source>
    </source>
</evidence>
<evidence type="ECO:0000269" key="19">
    <source>
    </source>
</evidence>
<evidence type="ECO:0000269" key="20">
    <source>
    </source>
</evidence>
<evidence type="ECO:0000269" key="21">
    <source>
    </source>
</evidence>
<evidence type="ECO:0000269" key="22">
    <source>
    </source>
</evidence>
<evidence type="ECO:0000269" key="23">
    <source>
    </source>
</evidence>
<evidence type="ECO:0000269" key="24">
    <source>
    </source>
</evidence>
<evidence type="ECO:0000269" key="25">
    <source>
    </source>
</evidence>
<evidence type="ECO:0000269" key="26">
    <source>
    </source>
</evidence>
<evidence type="ECO:0000269" key="27">
    <source>
    </source>
</evidence>
<evidence type="ECO:0000269" key="28">
    <source>
    </source>
</evidence>
<evidence type="ECO:0000269" key="29">
    <source>
    </source>
</evidence>
<evidence type="ECO:0000269" key="30">
    <source>
    </source>
</evidence>
<evidence type="ECO:0000269" key="31">
    <source>
    </source>
</evidence>
<evidence type="ECO:0000269" key="32">
    <source>
    </source>
</evidence>
<evidence type="ECO:0000269" key="33">
    <source>
    </source>
</evidence>
<evidence type="ECO:0000269" key="34">
    <source>
    </source>
</evidence>
<evidence type="ECO:0000303" key="35">
    <source>
    </source>
</evidence>
<evidence type="ECO:0000303" key="36">
    <source>
    </source>
</evidence>
<evidence type="ECO:0000303" key="37">
    <source>
    </source>
</evidence>
<evidence type="ECO:0000303" key="38">
    <source>
    </source>
</evidence>
<evidence type="ECO:0000303" key="39">
    <source>
    </source>
</evidence>
<evidence type="ECO:0000305" key="40"/>
<evidence type="ECO:0000305" key="41">
    <source>
    </source>
</evidence>
<evidence type="ECO:0000312" key="42">
    <source>
        <dbReference type="Araport" id="AT3G45780"/>
    </source>
</evidence>
<evidence type="ECO:0000312" key="43">
    <source>
        <dbReference type="EMBL" id="CAB75791.1"/>
    </source>
</evidence>
<evidence type="ECO:0007744" key="44">
    <source>
        <dbReference type="PDB" id="2Z6C"/>
    </source>
</evidence>
<evidence type="ECO:0007744" key="45">
    <source>
        <dbReference type="PDB" id="4HHD"/>
    </source>
</evidence>
<evidence type="ECO:0007744" key="46">
    <source>
    </source>
</evidence>
<evidence type="ECO:0007829" key="47">
    <source>
        <dbReference type="PDB" id="2Z6C"/>
    </source>
</evidence>
<evidence type="ECO:0007829" key="48">
    <source>
        <dbReference type="PDB" id="4HHD"/>
    </source>
</evidence>
<feature type="chain" id="PRO_0000086522" description="Phototropin-1">
    <location>
        <begin position="1"/>
        <end position="996"/>
    </location>
</feature>
<feature type="domain" description="PAS 1" evidence="4">
    <location>
        <begin position="184"/>
        <end position="257"/>
    </location>
</feature>
<feature type="domain" description="PAC 1" evidence="5">
    <location>
        <begin position="258"/>
        <end position="312"/>
    </location>
</feature>
<feature type="domain" description="PAS 2" evidence="4">
    <location>
        <begin position="462"/>
        <end position="535"/>
    </location>
</feature>
<feature type="domain" description="PAC 2" evidence="5">
    <location>
        <begin position="536"/>
        <end position="590"/>
    </location>
</feature>
<feature type="domain" description="Protein kinase" evidence="6 40">
    <location>
        <begin position="663"/>
        <end position="952"/>
    </location>
</feature>
<feature type="region of interest" description="Disordered" evidence="8">
    <location>
        <begin position="1"/>
        <end position="184"/>
    </location>
</feature>
<feature type="region of interest" description="Disordered" evidence="8">
    <location>
        <begin position="351"/>
        <end position="413"/>
    </location>
</feature>
<feature type="region of interest" description="Disordered" evidence="8">
    <location>
        <begin position="434"/>
        <end position="453"/>
    </location>
</feature>
<feature type="region of interest" description="Activation loop" evidence="1">
    <location>
        <begin position="806"/>
        <end position="862"/>
    </location>
</feature>
<feature type="compositionally biased region" description="Polar residues" evidence="8">
    <location>
        <begin position="49"/>
        <end position="59"/>
    </location>
</feature>
<feature type="compositionally biased region" description="Pro residues" evidence="8">
    <location>
        <begin position="60"/>
        <end position="70"/>
    </location>
</feature>
<feature type="compositionally biased region" description="Polar residues" evidence="8">
    <location>
        <begin position="141"/>
        <end position="153"/>
    </location>
</feature>
<feature type="compositionally biased region" description="Low complexity" evidence="8">
    <location>
        <begin position="155"/>
        <end position="166"/>
    </location>
</feature>
<feature type="compositionally biased region" description="Acidic residues" evidence="8">
    <location>
        <begin position="434"/>
        <end position="443"/>
    </location>
</feature>
<feature type="compositionally biased region" description="Basic and acidic residues" evidence="8">
    <location>
        <begin position="444"/>
        <end position="453"/>
    </location>
</feature>
<feature type="active site" description="Proton acceptor" evidence="6 7">
    <location>
        <position position="788"/>
    </location>
</feature>
<feature type="binding site" evidence="23 44">
    <location>
        <position position="233"/>
    </location>
    <ligand>
        <name>FMN</name>
        <dbReference type="ChEBI" id="CHEBI:58210"/>
        <label>1</label>
    </ligand>
</feature>
<feature type="binding site" evidence="23 44">
    <location>
        <position position="235"/>
    </location>
    <ligand>
        <name>FMN</name>
        <dbReference type="ChEBI" id="CHEBI:58210"/>
        <label>1</label>
    </ligand>
</feature>
<feature type="binding site" evidence="23 44">
    <location>
        <position position="238"/>
    </location>
    <ligand>
        <name>FMN</name>
        <dbReference type="ChEBI" id="CHEBI:58210"/>
        <label>1</label>
    </ligand>
</feature>
<feature type="binding site" evidence="23 44">
    <location>
        <position position="251"/>
    </location>
    <ligand>
        <name>FMN</name>
        <dbReference type="ChEBI" id="CHEBI:58210"/>
        <label>1</label>
    </ligand>
</feature>
<feature type="binding site" evidence="23 44">
    <location>
        <position position="266"/>
    </location>
    <ligand>
        <name>FMN</name>
        <dbReference type="ChEBI" id="CHEBI:58210"/>
        <label>1</label>
    </ligand>
</feature>
<feature type="binding site" evidence="23 44">
    <location>
        <position position="276"/>
    </location>
    <ligand>
        <name>FMN</name>
        <dbReference type="ChEBI" id="CHEBI:58210"/>
        <label>1</label>
    </ligand>
</feature>
<feature type="binding site" evidence="23 44">
    <location>
        <position position="297"/>
    </location>
    <ligand>
        <name>FMN</name>
        <dbReference type="ChEBI" id="CHEBI:58210"/>
        <label>1</label>
    </ligand>
</feature>
<feature type="binding site" evidence="2">
    <location>
        <position position="302"/>
    </location>
    <ligand>
        <name>FMN</name>
        <dbReference type="ChEBI" id="CHEBI:58210"/>
        <label>1</label>
    </ligand>
</feature>
<feature type="binding site" evidence="28 45">
    <location>
        <position position="511"/>
    </location>
    <ligand>
        <name>FMN</name>
        <dbReference type="ChEBI" id="CHEBI:58210"/>
        <label>2</label>
    </ligand>
</feature>
<feature type="binding site" evidence="28 45">
    <location>
        <position position="513"/>
    </location>
    <ligand>
        <name>FMN</name>
        <dbReference type="ChEBI" id="CHEBI:58210"/>
        <label>2</label>
    </ligand>
</feature>
<feature type="binding site" evidence="28 45">
    <location>
        <position position="516"/>
    </location>
    <ligand>
        <name>FMN</name>
        <dbReference type="ChEBI" id="CHEBI:58210"/>
        <label>2</label>
    </ligand>
</feature>
<feature type="binding site" evidence="28 45">
    <location>
        <position position="529"/>
    </location>
    <ligand>
        <name>FMN</name>
        <dbReference type="ChEBI" id="CHEBI:58210"/>
        <label>2</label>
    </ligand>
</feature>
<feature type="binding site" evidence="28 45">
    <location>
        <position position="544"/>
    </location>
    <ligand>
        <name>FMN</name>
        <dbReference type="ChEBI" id="CHEBI:58210"/>
        <label>2</label>
    </ligand>
</feature>
<feature type="binding site" evidence="28 45">
    <location>
        <position position="554"/>
    </location>
    <ligand>
        <name>FMN</name>
        <dbReference type="ChEBI" id="CHEBI:58210"/>
        <label>2</label>
    </ligand>
</feature>
<feature type="binding site" evidence="28 45">
    <location>
        <position position="556"/>
    </location>
    <ligand>
        <name>FMN</name>
        <dbReference type="ChEBI" id="CHEBI:58210"/>
        <label>2</label>
    </ligand>
</feature>
<feature type="binding site" evidence="28 45">
    <location>
        <position position="575"/>
    </location>
    <ligand>
        <name>FMN</name>
        <dbReference type="ChEBI" id="CHEBI:58210"/>
        <label>2</label>
    </ligand>
</feature>
<feature type="binding site" evidence="6 40">
    <location>
        <begin position="669"/>
        <end position="677"/>
    </location>
    <ligand>
        <name>ATP</name>
        <dbReference type="ChEBI" id="CHEBI:30616"/>
    </ligand>
</feature>
<feature type="binding site" evidence="6 40">
    <location>
        <position position="692"/>
    </location>
    <ligand>
        <name>ATP</name>
        <dbReference type="ChEBI" id="CHEBI:30616"/>
    </ligand>
</feature>
<feature type="modified residue" description="Phosphoserine" evidence="2">
    <location>
        <position position="23"/>
    </location>
</feature>
<feature type="modified residue" description="Phosphoserine" evidence="24">
    <location>
        <position position="58"/>
    </location>
</feature>
<feature type="modified residue" description="Phosphoserine" evidence="24">
    <location>
        <position position="185"/>
    </location>
</feature>
<feature type="modified residue" description="S-4a-FMN cysteine">
    <location>
        <position position="234"/>
    </location>
</feature>
<feature type="modified residue" description="Phosphoserine" evidence="24 46">
    <location>
        <position position="350"/>
    </location>
</feature>
<feature type="modified residue" description="Phosphoserine" evidence="46">
    <location>
        <position position="376"/>
    </location>
</feature>
<feature type="modified residue" description="Phosphoserine" evidence="24">
    <location>
        <position position="410"/>
    </location>
</feature>
<feature type="modified residue" description="Phosphoserine" evidence="46">
    <location>
        <position position="450"/>
    </location>
</feature>
<feature type="modified residue" description="S-4a-FMN cysteine">
    <location>
        <position position="512"/>
    </location>
</feature>
<feature type="disulfide bond" description="Interchain" evidence="23 44">
    <location>
        <position position="261"/>
    </location>
</feature>
<feature type="mutagenesis site" description="No effect on the kinase activity regulation." evidence="15">
    <original>C</original>
    <variation>A</variation>
    <location>
        <position position="234"/>
    </location>
</feature>
<feature type="mutagenesis site" description="Loss of light-sensing and light-dependent autophosphorylation." evidence="14 15">
    <original>C</original>
    <variation>A</variation>
    <location>
        <position position="512"/>
    </location>
</feature>
<feature type="mutagenesis site" description="In nph1-1; loss of phototropism." evidence="33">
    <location>
        <position position="774"/>
    </location>
</feature>
<feature type="mutagenesis site" description="Lost kinase activity, unable to phosphorylate CBC1." evidence="30">
    <original>D</original>
    <variation>N</variation>
    <location>
        <position position="806"/>
    </location>
</feature>
<feature type="mutagenesis site" description="In nph1-2; partial phototropism." evidence="33">
    <original>R</original>
    <variation>K</variation>
    <location>
        <position position="936"/>
    </location>
</feature>
<feature type="helix" evidence="47">
    <location>
        <begin position="186"/>
        <end position="191"/>
    </location>
</feature>
<feature type="strand" evidence="47">
    <location>
        <begin position="197"/>
        <end position="203"/>
    </location>
</feature>
<feature type="strand" evidence="47">
    <location>
        <begin position="211"/>
        <end position="214"/>
    </location>
</feature>
<feature type="helix" evidence="47">
    <location>
        <begin position="218"/>
        <end position="222"/>
    </location>
</feature>
<feature type="turn" evidence="47">
    <location>
        <begin position="226"/>
        <end position="231"/>
    </location>
</feature>
<feature type="helix" evidence="47">
    <location>
        <begin position="234"/>
        <end position="237"/>
    </location>
</feature>
<feature type="helix" evidence="47">
    <location>
        <begin position="244"/>
        <end position="256"/>
    </location>
</feature>
<feature type="strand" evidence="47">
    <location>
        <begin position="260"/>
        <end position="267"/>
    </location>
</feature>
<feature type="strand" evidence="47">
    <location>
        <begin position="273"/>
        <end position="284"/>
    </location>
</feature>
<feature type="strand" evidence="47">
    <location>
        <begin position="290"/>
        <end position="300"/>
    </location>
</feature>
<feature type="helix" evidence="48">
    <location>
        <begin position="453"/>
        <end position="471"/>
    </location>
</feature>
<feature type="strand" evidence="48">
    <location>
        <begin position="475"/>
        <end position="480"/>
    </location>
</feature>
<feature type="strand" evidence="48">
    <location>
        <begin position="489"/>
        <end position="492"/>
    </location>
</feature>
<feature type="helix" evidence="48">
    <location>
        <begin position="494"/>
        <end position="500"/>
    </location>
</feature>
<feature type="helix" evidence="48">
    <location>
        <begin position="504"/>
        <end position="507"/>
    </location>
</feature>
<feature type="helix" evidence="48">
    <location>
        <begin position="512"/>
        <end position="515"/>
    </location>
</feature>
<feature type="helix" evidence="48">
    <location>
        <begin position="522"/>
        <end position="533"/>
    </location>
</feature>
<feature type="strand" evidence="48">
    <location>
        <begin position="538"/>
        <end position="545"/>
    </location>
</feature>
<feature type="strand" evidence="48">
    <location>
        <begin position="551"/>
        <end position="562"/>
    </location>
</feature>
<feature type="strand" evidence="48">
    <location>
        <begin position="568"/>
        <end position="575"/>
    </location>
</feature>
<feature type="helix" evidence="48">
    <location>
        <begin position="588"/>
        <end position="592"/>
    </location>
</feature>
<feature type="helix" evidence="48">
    <location>
        <begin position="595"/>
        <end position="613"/>
    </location>
</feature>